<keyword id="KW-0002">3D-structure</keyword>
<keyword id="KW-0175">Coiled coil</keyword>
<keyword id="KW-0903">Direct protein sequencing</keyword>
<keyword id="KW-1015">Disulfide bond</keyword>
<keyword id="KW-0245">EGF-like domain</keyword>
<keyword id="KW-0272">Extracellular matrix</keyword>
<keyword id="KW-0325">Glycoprotein</keyword>
<keyword id="KW-1185">Reference proteome</keyword>
<keyword id="KW-0677">Repeat</keyword>
<keyword id="KW-0964">Secreted</keyword>
<keyword id="KW-0732">Signal</keyword>
<name>MATN1_CHICK</name>
<comment type="function">
    <text evidence="2 6">A major component of the extracellular matrix of non-articular cartilage (PubMed:1600245). Binds to type 2 collagens and forms long concatenated protein networks as part of the extracellular matrix (PubMed:1600245). Required for the network-like organization and bundling of collagen fibrils surrounding chondrocytes in the zones of maturation and hypertrophy (By similarity). Required for mechanotransduction and adaption to mechanical loading in cartilage chondrocytes, resulting in an increase in expression of the extracellular matrix components ACAN and COL2A1 (By similarity). Acts as a moderator of angiogenesis in response to injury (By similarity).</text>
</comment>
<comment type="subunit">
    <text evidence="8">Homotrimer.</text>
</comment>
<comment type="subcellular location">
    <subcellularLocation>
        <location evidence="6">Secreted</location>
        <location evidence="6">Extracellular space</location>
        <location evidence="6">Extracellular matrix</location>
    </subcellularLocation>
</comment>
<comment type="tissue specificity">
    <text evidence="6">Expressed in xyphoid cartilage and chondrocytes (at protein level).</text>
</comment>
<organism>
    <name type="scientific">Gallus gallus</name>
    <name type="common">Chicken</name>
    <dbReference type="NCBI Taxonomy" id="9031"/>
    <lineage>
        <taxon>Eukaryota</taxon>
        <taxon>Metazoa</taxon>
        <taxon>Chordata</taxon>
        <taxon>Craniata</taxon>
        <taxon>Vertebrata</taxon>
        <taxon>Euteleostomi</taxon>
        <taxon>Archelosauria</taxon>
        <taxon>Archosauria</taxon>
        <taxon>Dinosauria</taxon>
        <taxon>Saurischia</taxon>
        <taxon>Theropoda</taxon>
        <taxon>Coelurosauria</taxon>
        <taxon>Aves</taxon>
        <taxon>Neognathae</taxon>
        <taxon>Galloanserae</taxon>
        <taxon>Galliformes</taxon>
        <taxon>Phasianidae</taxon>
        <taxon>Phasianinae</taxon>
        <taxon>Gallus</taxon>
    </lineage>
</organism>
<proteinExistence type="evidence at protein level"/>
<sequence>MDGIFCALPLSLLLLLQSCGVWGAPPQPRGTLCRTKPTDLVFIIDSSRSVRPQEFEKVKVFLSRVIEGLDVGPNSTRVGVINYASAVKNEFSLKTHQTKAELLQAVQRIEPLSTGTMTGLAIQFAISRAFSDTEGARLRSPNINKVAIVVTDGRPQDGVQDVSARARQAGIEIFAIGVGRVDMHTLRQIASEPLDDHVDYVESYSVIEKLTHKFQEAFCVVSDLCATGDHDCEQICISTPGSYKCACKEGFTLNNDGKTCSACSGGSGSALDLVFLIDGSKSVRPENFELVKKFINQIVESLEVSEKQAQVGLVQYSSSVRQEFPLGQFKNKKDIKAAVKKMAYMEKGTMTGQALKYLVDSSFSIANGARPGVPKVGIVFTDGRSQDYITDAAKKAKDLGFRMFAVGVGNAVEDELREIASEPVAEHYFYTADFRTISNIGKKLQMKICVEEDPCECKSIVKFQTKVEELINTLQQKLEAVAKRIEALENKII</sequence>
<evidence type="ECO:0000250" key="1">
    <source>
        <dbReference type="UniProtKB" id="P21941"/>
    </source>
</evidence>
<evidence type="ECO:0000250" key="2">
    <source>
        <dbReference type="UniProtKB" id="P51942"/>
    </source>
</evidence>
<evidence type="ECO:0000255" key="3"/>
<evidence type="ECO:0000255" key="4">
    <source>
        <dbReference type="PROSITE-ProRule" id="PRU00076"/>
    </source>
</evidence>
<evidence type="ECO:0000255" key="5">
    <source>
        <dbReference type="PROSITE-ProRule" id="PRU00219"/>
    </source>
</evidence>
<evidence type="ECO:0000269" key="6">
    <source>
    </source>
</evidence>
<evidence type="ECO:0000269" key="7">
    <source>
    </source>
</evidence>
<evidence type="ECO:0000269" key="8">
    <source>
    </source>
</evidence>
<evidence type="ECO:0000303" key="9">
    <source>
    </source>
</evidence>
<evidence type="ECO:0007829" key="10">
    <source>
        <dbReference type="PDB" id="1AQ5"/>
    </source>
</evidence>
<feature type="signal peptide" evidence="7">
    <location>
        <begin position="1"/>
        <end position="23"/>
    </location>
</feature>
<feature type="chain" id="PRO_0000007494" description="Matrilin-1">
    <location>
        <begin position="24"/>
        <end position="493"/>
    </location>
</feature>
<feature type="domain" description="VWFA 1" evidence="5">
    <location>
        <begin position="24"/>
        <end position="220"/>
    </location>
</feature>
<feature type="domain" description="EGF-like" evidence="4">
    <location>
        <begin position="221"/>
        <end position="261"/>
    </location>
</feature>
<feature type="domain" description="VWFA 2" evidence="5">
    <location>
        <begin position="262"/>
        <end position="450"/>
    </location>
</feature>
<feature type="coiled-coil region">
    <location>
        <begin position="462"/>
        <end position="492"/>
    </location>
</feature>
<feature type="glycosylation site" description="N-linked (GlcNAc...) asparagine" evidence="3">
    <location>
        <position position="74"/>
    </location>
</feature>
<feature type="disulfide bond" evidence="4">
    <location>
        <begin position="225"/>
        <end position="236"/>
    </location>
</feature>
<feature type="disulfide bond" evidence="4">
    <location>
        <begin position="232"/>
        <end position="245"/>
    </location>
</feature>
<feature type="disulfide bond" evidence="4">
    <location>
        <begin position="247"/>
        <end position="260"/>
    </location>
</feature>
<feature type="strand" evidence="10">
    <location>
        <begin position="450"/>
        <end position="452"/>
    </location>
</feature>
<feature type="helix" evidence="10">
    <location>
        <begin position="459"/>
        <end position="492"/>
    </location>
</feature>
<accession>P05099</accession>
<gene>
    <name evidence="1" type="primary">MATN1</name>
    <name evidence="9" type="synonym">CMP</name>
</gene>
<dbReference type="EMBL" id="X12353">
    <property type="protein sequence ID" value="CAA30915.1"/>
    <property type="molecule type" value="Genomic_DNA"/>
</dbReference>
<dbReference type="EMBL" id="X12346">
    <property type="protein sequence ID" value="CAA30915.1"/>
    <property type="status" value="JOINED"/>
    <property type="molecule type" value="Genomic_DNA"/>
</dbReference>
<dbReference type="EMBL" id="X12347">
    <property type="protein sequence ID" value="CAA30915.1"/>
    <property type="status" value="JOINED"/>
    <property type="molecule type" value="Genomic_DNA"/>
</dbReference>
<dbReference type="EMBL" id="X12348">
    <property type="protein sequence ID" value="CAA30915.1"/>
    <property type="status" value="JOINED"/>
    <property type="molecule type" value="Genomic_DNA"/>
</dbReference>
<dbReference type="EMBL" id="X12349">
    <property type="protein sequence ID" value="CAA30915.1"/>
    <property type="status" value="JOINED"/>
    <property type="molecule type" value="Genomic_DNA"/>
</dbReference>
<dbReference type="EMBL" id="X12350">
    <property type="protein sequence ID" value="CAA30915.1"/>
    <property type="status" value="JOINED"/>
    <property type="molecule type" value="Genomic_DNA"/>
</dbReference>
<dbReference type="EMBL" id="X12351">
    <property type="protein sequence ID" value="CAA30915.1"/>
    <property type="status" value="JOINED"/>
    <property type="molecule type" value="Genomic_DNA"/>
</dbReference>
<dbReference type="EMBL" id="X12352">
    <property type="protein sequence ID" value="CAA30915.1"/>
    <property type="status" value="JOINED"/>
    <property type="molecule type" value="Genomic_DNA"/>
</dbReference>
<dbReference type="EMBL" id="M14792">
    <property type="protein sequence ID" value="AAA48695.1"/>
    <property type="molecule type" value="mRNA"/>
</dbReference>
<dbReference type="EMBL" id="M97497">
    <property type="protein sequence ID" value="AAC18872.1"/>
    <property type="molecule type" value="Genomic_DNA"/>
</dbReference>
<dbReference type="PIR" id="A33809">
    <property type="entry name" value="A33809"/>
</dbReference>
<dbReference type="PDB" id="1AQ5">
    <property type="method" value="NMR"/>
    <property type="chains" value="A/B/C=451-493"/>
</dbReference>
<dbReference type="PDBsum" id="1AQ5"/>
<dbReference type="BMRB" id="P05099"/>
<dbReference type="SMR" id="P05099"/>
<dbReference type="FunCoup" id="P05099">
    <property type="interactions" value="32"/>
</dbReference>
<dbReference type="STRING" id="9031.ENSGALP00000057052"/>
<dbReference type="GlyCosmos" id="P05099">
    <property type="glycosylation" value="1 site, No reported glycans"/>
</dbReference>
<dbReference type="GlyGen" id="P05099">
    <property type="glycosylation" value="1 site"/>
</dbReference>
<dbReference type="PaxDb" id="9031-ENSGALP00000000760"/>
<dbReference type="VEuPathDB" id="HostDB:geneid_396505"/>
<dbReference type="eggNOG" id="KOG1217">
    <property type="taxonomic scope" value="Eukaryota"/>
</dbReference>
<dbReference type="InParanoid" id="P05099"/>
<dbReference type="OrthoDB" id="6022609at2759"/>
<dbReference type="PhylomeDB" id="P05099"/>
<dbReference type="EvolutionaryTrace" id="P05099"/>
<dbReference type="Proteomes" id="UP000000539">
    <property type="component" value="Unassembled WGS sequence"/>
</dbReference>
<dbReference type="GO" id="GO:0062023">
    <property type="term" value="C:collagen-containing extracellular matrix"/>
    <property type="evidence" value="ECO:0000318"/>
    <property type="project" value="GO_Central"/>
</dbReference>
<dbReference type="GO" id="GO:0005576">
    <property type="term" value="C:extracellular region"/>
    <property type="evidence" value="ECO:0007669"/>
    <property type="project" value="UniProtKB-KW"/>
</dbReference>
<dbReference type="GO" id="GO:0005509">
    <property type="term" value="F:calcium ion binding"/>
    <property type="evidence" value="ECO:0007669"/>
    <property type="project" value="InterPro"/>
</dbReference>
<dbReference type="CDD" id="cd01475">
    <property type="entry name" value="vWA_Matrilin"/>
    <property type="match status" value="1"/>
</dbReference>
<dbReference type="FunFam" id="2.10.25.10:FF:000408">
    <property type="entry name" value="Cartilage matrix protein"/>
    <property type="match status" value="1"/>
</dbReference>
<dbReference type="FunFam" id="3.40.50.410:FF:000004">
    <property type="entry name" value="collagen alpha-6(VI) chain"/>
    <property type="match status" value="1"/>
</dbReference>
<dbReference type="FunFam" id="3.40.50.410:FF:000018">
    <property type="entry name" value="Matrilin 1"/>
    <property type="match status" value="1"/>
</dbReference>
<dbReference type="Gene3D" id="1.20.5.30">
    <property type="match status" value="1"/>
</dbReference>
<dbReference type="Gene3D" id="2.10.25.10">
    <property type="entry name" value="Laminin"/>
    <property type="match status" value="1"/>
</dbReference>
<dbReference type="Gene3D" id="3.40.50.410">
    <property type="entry name" value="von Willebrand factor, type A domain"/>
    <property type="match status" value="2"/>
</dbReference>
<dbReference type="InterPro" id="IPR050525">
    <property type="entry name" value="ECM_Assembly_Org"/>
</dbReference>
<dbReference type="InterPro" id="IPR001881">
    <property type="entry name" value="EGF-like_Ca-bd_dom"/>
</dbReference>
<dbReference type="InterPro" id="IPR000742">
    <property type="entry name" value="EGF-like_dom"/>
</dbReference>
<dbReference type="InterPro" id="IPR036337">
    <property type="entry name" value="Matrilin_cc_sf"/>
</dbReference>
<dbReference type="InterPro" id="IPR019466">
    <property type="entry name" value="Matrilin_coiled-coil_trimer"/>
</dbReference>
<dbReference type="InterPro" id="IPR002035">
    <property type="entry name" value="VWF_A"/>
</dbReference>
<dbReference type="InterPro" id="IPR036465">
    <property type="entry name" value="vWFA_dom_sf"/>
</dbReference>
<dbReference type="PANTHER" id="PTHR24020:SF16">
    <property type="entry name" value="CARTILAGE MATRIX PROTEIN"/>
    <property type="match status" value="1"/>
</dbReference>
<dbReference type="PANTHER" id="PTHR24020">
    <property type="entry name" value="COLLAGEN ALPHA"/>
    <property type="match status" value="1"/>
</dbReference>
<dbReference type="Pfam" id="PF14670">
    <property type="entry name" value="FXa_inhibition"/>
    <property type="match status" value="1"/>
</dbReference>
<dbReference type="Pfam" id="PF10393">
    <property type="entry name" value="Matrilin_ccoil"/>
    <property type="match status" value="1"/>
</dbReference>
<dbReference type="Pfam" id="PF00092">
    <property type="entry name" value="VWA"/>
    <property type="match status" value="2"/>
</dbReference>
<dbReference type="PRINTS" id="PR00453">
    <property type="entry name" value="VWFADOMAIN"/>
</dbReference>
<dbReference type="SMART" id="SM00181">
    <property type="entry name" value="EGF"/>
    <property type="match status" value="1"/>
</dbReference>
<dbReference type="SMART" id="SM00179">
    <property type="entry name" value="EGF_CA"/>
    <property type="match status" value="1"/>
</dbReference>
<dbReference type="SMART" id="SM01279">
    <property type="entry name" value="Matrilin_ccoil"/>
    <property type="match status" value="1"/>
</dbReference>
<dbReference type="SMART" id="SM00327">
    <property type="entry name" value="VWA"/>
    <property type="match status" value="2"/>
</dbReference>
<dbReference type="SUPFAM" id="SSF58002">
    <property type="entry name" value="Chicken cartilage matrix protein"/>
    <property type="match status" value="1"/>
</dbReference>
<dbReference type="SUPFAM" id="SSF53300">
    <property type="entry name" value="vWA-like"/>
    <property type="match status" value="2"/>
</dbReference>
<dbReference type="PROSITE" id="PS01186">
    <property type="entry name" value="EGF_2"/>
    <property type="match status" value="1"/>
</dbReference>
<dbReference type="PROSITE" id="PS50234">
    <property type="entry name" value="VWFA"/>
    <property type="match status" value="2"/>
</dbReference>
<protein>
    <recommendedName>
        <fullName evidence="1">Matrilin-1</fullName>
    </recommendedName>
    <alternativeName>
        <fullName evidence="9">Cartilage matrix protein</fullName>
    </alternativeName>
</protein>
<reference key="1">
    <citation type="journal article" date="1989" name="J. Biol. Chem.">
        <title>Structure of the gene for cartilage matrix protein, a modular protein of the extracellular matrix. Exon/intron organization, unusual splice sites, and relation to alpha chains of beta 2 integrins, von Willebrand factor, complement factors B and C2, and epidermal growth factor.</title>
        <authorList>
            <person name="Kiss I."/>
            <person name="Deak F."/>
            <person name="Holloway R.G. Jr."/>
            <person name="Delius H."/>
            <person name="Mebust K.A."/>
            <person name="Frimberger E."/>
            <person name="Argraves W.S."/>
            <person name="Tsonis P.A."/>
            <person name="Winterbottom N."/>
            <person name="Goetinck P.F."/>
        </authorList>
    </citation>
    <scope>NUCLEOTIDE SEQUENCE [GENOMIC DNA]</scope>
    <scope>PROTEIN SEQUENCE OF 24-43</scope>
    <source>
        <strain>White leghorn</strain>
    </source>
</reference>
<reference key="2">
    <citation type="journal article" date="1987" name="Proc. Natl. Acad. Sci. U.S.A.">
        <title>Structural features of cartilage matrix protein deduced from cDNA.</title>
        <authorList>
            <person name="Argraves W.S."/>
            <person name="Deak F."/>
            <person name="Sparks K.J."/>
            <person name="Kiss I."/>
            <person name="Goetinck P.F."/>
        </authorList>
    </citation>
    <scope>NUCLEOTIDE SEQUENCE [MRNA] OF 78-493</scope>
</reference>
<reference key="3">
    <citation type="journal article" date="1992" name="Dev. Dyn.">
        <title>Cartilage matrix protein is a component of the collagen fibril of cartilage.</title>
        <authorList>
            <person name="Winterbottom N."/>
            <person name="Tondravi M.M."/>
            <person name="Harrington T.L."/>
            <person name="Klier F.G."/>
            <person name="Vertel B.M."/>
            <person name="Goetinck P.F."/>
        </authorList>
    </citation>
    <scope>FUNCTION</scope>
    <scope>SUBCELLULAR LOCATION</scope>
    <scope>TISSUE SPECIFICITY</scope>
</reference>
<reference key="4">
    <citation type="journal article" date="1997" name="Protein Sci.">
        <title>Heteronuclear NMR assignments and secondary structure of the coiled coil trimerization domain from cartilage matrix protein in oxidized and reduced forms.</title>
        <authorList>
            <person name="Wiltscheck R."/>
            <person name="Kammerer R.A."/>
            <person name="Dames S.A."/>
            <person name="Schulthess T."/>
            <person name="Blommers M.J."/>
            <person name="Engel J."/>
            <person name="Alexandrescu A.T."/>
        </authorList>
    </citation>
    <scope>STRUCTURE BY NMR OF 447-493</scope>
    <scope>SUBUNIT</scope>
</reference>